<feature type="chain" id="PRO_0000136330" description="Histidine--tRNA ligase, chloroplastic">
    <location>
        <begin position="1"/>
        <end position="420"/>
    </location>
</feature>
<accession>Q6B910</accession>
<proteinExistence type="inferred from homology"/>
<comment type="catalytic activity">
    <reaction evidence="1">
        <text>tRNA(His) + L-histidine + ATP = L-histidyl-tRNA(His) + AMP + diphosphate + H(+)</text>
        <dbReference type="Rhea" id="RHEA:17313"/>
        <dbReference type="Rhea" id="RHEA-COMP:9665"/>
        <dbReference type="Rhea" id="RHEA-COMP:9689"/>
        <dbReference type="ChEBI" id="CHEBI:15378"/>
        <dbReference type="ChEBI" id="CHEBI:30616"/>
        <dbReference type="ChEBI" id="CHEBI:33019"/>
        <dbReference type="ChEBI" id="CHEBI:57595"/>
        <dbReference type="ChEBI" id="CHEBI:78442"/>
        <dbReference type="ChEBI" id="CHEBI:78527"/>
        <dbReference type="ChEBI" id="CHEBI:456215"/>
        <dbReference type="EC" id="6.1.1.21"/>
    </reaction>
</comment>
<comment type="subcellular location">
    <subcellularLocation>
        <location>Plastid</location>
        <location>Chloroplast</location>
    </subcellularLocation>
</comment>
<comment type="similarity">
    <text evidence="1">Belongs to the class-II aminoacyl-tRNA synthetase family.</text>
</comment>
<name>SYH_GRATL</name>
<protein>
    <recommendedName>
        <fullName evidence="1">Histidine--tRNA ligase, chloroplastic</fullName>
        <ecNumber evidence="1">6.1.1.21</ecNumber>
    </recommendedName>
    <alternativeName>
        <fullName evidence="1">Histidyl-tRNA synthetase</fullName>
        <shortName evidence="1">HisRS</shortName>
    </alternativeName>
</protein>
<dbReference type="EC" id="6.1.1.21" evidence="1"/>
<dbReference type="EMBL" id="AY673996">
    <property type="protein sequence ID" value="AAT79625.1"/>
    <property type="molecule type" value="Genomic_DNA"/>
</dbReference>
<dbReference type="SMR" id="Q6B910"/>
<dbReference type="GO" id="GO:0009507">
    <property type="term" value="C:chloroplast"/>
    <property type="evidence" value="ECO:0007669"/>
    <property type="project" value="UniProtKB-SubCell"/>
</dbReference>
<dbReference type="GO" id="GO:0005524">
    <property type="term" value="F:ATP binding"/>
    <property type="evidence" value="ECO:0007669"/>
    <property type="project" value="UniProtKB-UniRule"/>
</dbReference>
<dbReference type="GO" id="GO:0004821">
    <property type="term" value="F:histidine-tRNA ligase activity"/>
    <property type="evidence" value="ECO:0007669"/>
    <property type="project" value="UniProtKB-UniRule"/>
</dbReference>
<dbReference type="GO" id="GO:0006427">
    <property type="term" value="P:histidyl-tRNA aminoacylation"/>
    <property type="evidence" value="ECO:0007669"/>
    <property type="project" value="UniProtKB-UniRule"/>
</dbReference>
<dbReference type="CDD" id="cd00773">
    <property type="entry name" value="HisRS-like_core"/>
    <property type="match status" value="1"/>
</dbReference>
<dbReference type="Gene3D" id="3.40.50.800">
    <property type="entry name" value="Anticodon-binding domain"/>
    <property type="match status" value="1"/>
</dbReference>
<dbReference type="Gene3D" id="3.30.930.10">
    <property type="entry name" value="Bira Bifunctional Protein, Domain 2"/>
    <property type="match status" value="1"/>
</dbReference>
<dbReference type="HAMAP" id="MF_00127">
    <property type="entry name" value="His_tRNA_synth"/>
    <property type="match status" value="1"/>
</dbReference>
<dbReference type="InterPro" id="IPR006195">
    <property type="entry name" value="aa-tRNA-synth_II"/>
</dbReference>
<dbReference type="InterPro" id="IPR045864">
    <property type="entry name" value="aa-tRNA-synth_II/BPL/LPL"/>
</dbReference>
<dbReference type="InterPro" id="IPR004154">
    <property type="entry name" value="Anticodon-bd"/>
</dbReference>
<dbReference type="InterPro" id="IPR036621">
    <property type="entry name" value="Anticodon-bd_dom_sf"/>
</dbReference>
<dbReference type="InterPro" id="IPR015807">
    <property type="entry name" value="His-tRNA-ligase"/>
</dbReference>
<dbReference type="InterPro" id="IPR041715">
    <property type="entry name" value="HisRS-like_core"/>
</dbReference>
<dbReference type="InterPro" id="IPR004516">
    <property type="entry name" value="HisRS/HisZ"/>
</dbReference>
<dbReference type="NCBIfam" id="TIGR00442">
    <property type="entry name" value="hisS"/>
    <property type="match status" value="1"/>
</dbReference>
<dbReference type="PANTHER" id="PTHR43707:SF1">
    <property type="entry name" value="HISTIDINE--TRNA LIGASE, MITOCHONDRIAL-RELATED"/>
    <property type="match status" value="1"/>
</dbReference>
<dbReference type="PANTHER" id="PTHR43707">
    <property type="entry name" value="HISTIDYL-TRNA SYNTHETASE"/>
    <property type="match status" value="1"/>
</dbReference>
<dbReference type="Pfam" id="PF03129">
    <property type="entry name" value="HGTP_anticodon"/>
    <property type="match status" value="1"/>
</dbReference>
<dbReference type="Pfam" id="PF13393">
    <property type="entry name" value="tRNA-synt_His"/>
    <property type="match status" value="1"/>
</dbReference>
<dbReference type="PIRSF" id="PIRSF001549">
    <property type="entry name" value="His-tRNA_synth"/>
    <property type="match status" value="1"/>
</dbReference>
<dbReference type="SUPFAM" id="SSF52954">
    <property type="entry name" value="Class II aaRS ABD-related"/>
    <property type="match status" value="1"/>
</dbReference>
<dbReference type="SUPFAM" id="SSF55681">
    <property type="entry name" value="Class II aaRS and biotin synthetases"/>
    <property type="match status" value="1"/>
</dbReference>
<dbReference type="PROSITE" id="PS50862">
    <property type="entry name" value="AA_TRNA_LIGASE_II"/>
    <property type="match status" value="1"/>
</dbReference>
<evidence type="ECO:0000255" key="1">
    <source>
        <dbReference type="HAMAP-Rule" id="MF_00127"/>
    </source>
</evidence>
<organism>
    <name type="scientific">Gracilaria tenuistipitata var. liui</name>
    <name type="common">Red alga</name>
    <dbReference type="NCBI Taxonomy" id="285951"/>
    <lineage>
        <taxon>Eukaryota</taxon>
        <taxon>Rhodophyta</taxon>
        <taxon>Florideophyceae</taxon>
        <taxon>Rhodymeniophycidae</taxon>
        <taxon>Gracilariales</taxon>
        <taxon>Gracilariaceae</taxon>
        <taxon>Gracilaria</taxon>
        <taxon>Gracilaria tenuistipitata</taxon>
    </lineage>
</organism>
<geneLocation type="chloroplast"/>
<sequence length="420" mass="48859">MKSYFMQPLRGTKDILPNEINYWHHIHDKALTILSLHNYSEIRTPIIESTSLFKRSIGETSDIINKEMYTFTDQGDRSITLRPEATASIARAFISNKLYHSNIQRLWYLGPMFRYERPQSGRQRQFHQLGIECIGSINPMADTEVIHLANQLLKELQVKNYILEINSIGTLEERQSYKLDLVEYLSQYQQDLDQDSKNRMYSNPLRILDSKNLKTQEILDGAPKLKKYLNKRSTEHFYLVCTYLNNLNITYKINYKLVRGLDYYNQTAFEIKTNSKNSQNTICGGGRYDTLIEQLGGPKTPAVGWAIGIERLLKIIEDKLILPKQKINVYIATQGLAAQKKIWEIIQALEKKNIKFELDLSNTSFHKQIKKAGKLGAKFCIILGDQEIMDNCVTIKRLDEYVQYTAQYSNFLQEIHKLQH</sequence>
<gene>
    <name evidence="1" type="primary">hisS</name>
    <name type="ordered locus">Grc000044</name>
</gene>
<keyword id="KW-0030">Aminoacyl-tRNA synthetase</keyword>
<keyword id="KW-0067">ATP-binding</keyword>
<keyword id="KW-0150">Chloroplast</keyword>
<keyword id="KW-0436">Ligase</keyword>
<keyword id="KW-0547">Nucleotide-binding</keyword>
<keyword id="KW-0934">Plastid</keyword>
<keyword id="KW-0648">Protein biosynthesis</keyword>
<reference key="1">
    <citation type="journal article" date="2004" name="J. Mol. Evol.">
        <title>Comparative analysis of the complete plastid genome sequence of the red alga Gracilaria tenuistipitata var. liui provides insights into the evolution of rhodoplasts and their relationship to other plastids.</title>
        <authorList>
            <person name="Hagopian J.C."/>
            <person name="Reis M."/>
            <person name="Kitajima J.P."/>
            <person name="Bhattacharya D."/>
            <person name="de Oliveira M.C."/>
        </authorList>
    </citation>
    <scope>NUCLEOTIDE SEQUENCE [LARGE SCALE GENOMIC DNA]</scope>
</reference>